<evidence type="ECO:0000255" key="1">
    <source>
        <dbReference type="PROSITE-ProRule" id="PRU00260"/>
    </source>
</evidence>
<evidence type="ECO:0000255" key="2">
    <source>
        <dbReference type="PROSITE-ProRule" id="PRU00498"/>
    </source>
</evidence>
<evidence type="ECO:0000269" key="3">
    <source>
    </source>
</evidence>
<evidence type="ECO:0000303" key="4">
    <source>
    </source>
</evidence>
<evidence type="ECO:0000305" key="5"/>
<reference evidence="5" key="1">
    <citation type="journal article" date="2007" name="Biochim. Biophys. Acta">
        <title>Structural characterization of a rhamnose-binding glycoprotein (lectin) from Spanish mackerel (Scomberomorous niphonius) eggs.</title>
        <authorList>
            <person name="Terada T."/>
            <person name="Watanabe Y."/>
            <person name="Tateno H."/>
            <person name="Naganuma T."/>
            <person name="Ogawa T."/>
            <person name="Muramoto K."/>
            <person name="Kamiya H."/>
        </authorList>
    </citation>
    <scope>PROTEIN SEQUENCE</scope>
    <scope>FUNCTION</scope>
    <scope>SUBUNIT</scope>
    <scope>DISULFIDE BONDS</scope>
    <scope>MASS SPECTROMETRY</scope>
    <scope>GLYCOSYLATION AT ASN-168</scope>
    <source>
        <tissue evidence="4">Egg</tissue>
    </source>
</reference>
<keyword id="KW-0903">Direct protein sequencing</keyword>
<keyword id="KW-1015">Disulfide bond</keyword>
<keyword id="KW-0325">Glycoprotein</keyword>
<keyword id="KW-0348">Hemagglutinin</keyword>
<keyword id="KW-0430">Lectin</keyword>
<keyword id="KW-0677">Repeat</keyword>
<accession>C0HK23</accession>
<organism evidence="4">
    <name type="scientific">Scomberomorus niphonius</name>
    <name type="common">Japanese Spanish mackerel</name>
    <name type="synonym">Cybium niphonium</name>
    <dbReference type="NCBI Taxonomy" id="321164"/>
    <lineage>
        <taxon>Eukaryota</taxon>
        <taxon>Metazoa</taxon>
        <taxon>Chordata</taxon>
        <taxon>Craniata</taxon>
        <taxon>Vertebrata</taxon>
        <taxon>Euteleostomi</taxon>
        <taxon>Actinopterygii</taxon>
        <taxon>Neopterygii</taxon>
        <taxon>Teleostei</taxon>
        <taxon>Neoteleostei</taxon>
        <taxon>Acanthomorphata</taxon>
        <taxon>Pelagiaria</taxon>
        <taxon>Scombriformes</taxon>
        <taxon>Scombridae</taxon>
        <taxon>Scomberomorus</taxon>
    </lineage>
</organism>
<protein>
    <recommendedName>
        <fullName evidence="4">L-rhamnose-binding lectin SML</fullName>
    </recommendedName>
</protein>
<feature type="chain" id="PRO_0000437083" description="L-rhamnose-binding lectin SML" evidence="3">
    <location>
        <begin position="1"/>
        <end position="201"/>
    </location>
</feature>
<feature type="domain" description="SUEL-type lectin 1" evidence="1">
    <location>
        <begin position="18"/>
        <end position="100"/>
    </location>
</feature>
<feature type="domain" description="SUEL-type lectin 2" evidence="1">
    <location>
        <begin position="107"/>
        <end position="196"/>
    </location>
</feature>
<feature type="glycosylation site" description="N-linked (GlcNAc...) asparagine" evidence="2 3">
    <location>
        <position position="168"/>
    </location>
</feature>
<feature type="disulfide bond" evidence="3">
    <location>
        <begin position="10"/>
        <end position="40"/>
    </location>
</feature>
<feature type="disulfide bond" evidence="3">
    <location>
        <begin position="20"/>
        <end position="99"/>
    </location>
</feature>
<feature type="disulfide bond" evidence="3">
    <location>
        <begin position="54"/>
        <end position="86"/>
    </location>
</feature>
<feature type="disulfide bond" evidence="3">
    <location>
        <begin position="67"/>
        <end position="73"/>
    </location>
</feature>
<feature type="disulfide bond" evidence="3">
    <location>
        <begin position="108"/>
        <end position="138"/>
    </location>
</feature>
<feature type="disulfide bond" evidence="3">
    <location>
        <begin position="117"/>
        <end position="195"/>
    </location>
</feature>
<feature type="disulfide bond" evidence="3">
    <location>
        <begin position="152"/>
        <end position="182"/>
    </location>
</feature>
<feature type="disulfide bond" evidence="3">
    <location>
        <begin position="163"/>
        <end position="169"/>
    </location>
</feature>
<comment type="function">
    <text evidence="3">Rhamnose-binding lectin. Also binds melibiose, raffinose, D-galactose, L-arabinose, D-fucose, maltose and D-glucose with decreasing affinity. Does not bind D-arabinose, L-fucose, lactose, xylose or 2-deoxy-D-galactose. Shows strong hemagglutinating activity against rabbit erythrocytes.</text>
</comment>
<comment type="subunit">
    <text evidence="3">Homodimer; non-covalently linked.</text>
</comment>
<comment type="mass spectrometry" mass="23700.0" method="MALDI" evidence="3"/>
<name>SML_SCONI</name>
<dbReference type="SMR" id="C0HK23"/>
<dbReference type="iPTMnet" id="C0HK23"/>
<dbReference type="GO" id="GO:0030246">
    <property type="term" value="F:carbohydrate binding"/>
    <property type="evidence" value="ECO:0007669"/>
    <property type="project" value="UniProtKB-KW"/>
</dbReference>
<dbReference type="CDD" id="cd22833">
    <property type="entry name" value="Gal_Rha_Lectin_CSL1-2_RBL_SML_rpt1"/>
    <property type="match status" value="1"/>
</dbReference>
<dbReference type="CDD" id="cd22835">
    <property type="entry name" value="Gal_Rha_Lectin_SML_rpt2"/>
    <property type="match status" value="1"/>
</dbReference>
<dbReference type="FunFam" id="2.60.120.740:FF:000003">
    <property type="entry name" value="Protein eva-1 homolog C"/>
    <property type="match status" value="1"/>
</dbReference>
<dbReference type="Gene3D" id="2.60.120.740">
    <property type="match status" value="2"/>
</dbReference>
<dbReference type="InterPro" id="IPR000922">
    <property type="entry name" value="Lectin_gal-bd_dom"/>
</dbReference>
<dbReference type="InterPro" id="IPR043159">
    <property type="entry name" value="Lectin_gal-bd_sf"/>
</dbReference>
<dbReference type="PANTHER" id="PTHR46780">
    <property type="entry name" value="PROTEIN EVA-1"/>
    <property type="match status" value="1"/>
</dbReference>
<dbReference type="Pfam" id="PF02140">
    <property type="entry name" value="SUEL_Lectin"/>
    <property type="match status" value="2"/>
</dbReference>
<dbReference type="PROSITE" id="PS50228">
    <property type="entry name" value="SUEL_LECTIN"/>
    <property type="match status" value="2"/>
</dbReference>
<sequence length="201" mass="22109">AVPTETTTTCDGNHVHRLSCDIGVISVQTALYGREDSETCIEGKSLQQISNTECSLLGAVDVLKSRCDGKKVCELSTNIFRPSDPCSDTYKYLQTKYNCFPAIYLVTCEHSVAHLHCDVGQVISVYNADYGRNDHTTCSYERVPSQIQNRDCSNPTSKVAESCSGKNNCTIEASNLVFGDPCVGIYKYLEVAYVCQYPSIV</sequence>
<proteinExistence type="evidence at protein level"/>